<name>RL34_COXBR</name>
<comment type="similarity">
    <text evidence="1">Belongs to the bacterial ribosomal protein bL34 family.</text>
</comment>
<reference key="1">
    <citation type="submission" date="2007-11" db="EMBL/GenBank/DDBJ databases">
        <title>Genome sequencing of phylogenetically and phenotypically diverse Coxiella burnetii isolates.</title>
        <authorList>
            <person name="Seshadri R."/>
            <person name="Samuel J.E."/>
        </authorList>
    </citation>
    <scope>NUCLEOTIDE SEQUENCE [LARGE SCALE GENOMIC DNA]</scope>
    <source>
        <strain>RSA 331 / Henzerling II</strain>
    </source>
</reference>
<organism>
    <name type="scientific">Coxiella burnetii (strain RSA 331 / Henzerling II)</name>
    <dbReference type="NCBI Taxonomy" id="360115"/>
    <lineage>
        <taxon>Bacteria</taxon>
        <taxon>Pseudomonadati</taxon>
        <taxon>Pseudomonadota</taxon>
        <taxon>Gammaproteobacteria</taxon>
        <taxon>Legionellales</taxon>
        <taxon>Coxiellaceae</taxon>
        <taxon>Coxiella</taxon>
    </lineage>
</organism>
<evidence type="ECO:0000255" key="1">
    <source>
        <dbReference type="HAMAP-Rule" id="MF_00391"/>
    </source>
</evidence>
<evidence type="ECO:0000256" key="2">
    <source>
        <dbReference type="SAM" id="MobiDB-lite"/>
    </source>
</evidence>
<evidence type="ECO:0000305" key="3"/>
<keyword id="KW-0687">Ribonucleoprotein</keyword>
<keyword id="KW-0689">Ribosomal protein</keyword>
<proteinExistence type="inferred from homology"/>
<feature type="chain" id="PRO_1000080248" description="Large ribosomal subunit protein bL34">
    <location>
        <begin position="1"/>
        <end position="44"/>
    </location>
</feature>
<feature type="region of interest" description="Disordered" evidence="2">
    <location>
        <begin position="1"/>
        <end position="44"/>
    </location>
</feature>
<feature type="compositionally biased region" description="Basic residues" evidence="2">
    <location>
        <begin position="1"/>
        <end position="19"/>
    </location>
</feature>
<feature type="compositionally biased region" description="Basic residues" evidence="2">
    <location>
        <begin position="31"/>
        <end position="44"/>
    </location>
</feature>
<dbReference type="EMBL" id="CP000890">
    <property type="protein sequence ID" value="ABX78519.1"/>
    <property type="molecule type" value="Genomic_DNA"/>
</dbReference>
<dbReference type="RefSeq" id="WP_010958535.1">
    <property type="nucleotide sequence ID" value="NC_010117.1"/>
</dbReference>
<dbReference type="SMR" id="A9NBA2"/>
<dbReference type="KEGG" id="cbs:COXBURSA331_A2119"/>
<dbReference type="HOGENOM" id="CLU_129938_2_0_6"/>
<dbReference type="GO" id="GO:1990904">
    <property type="term" value="C:ribonucleoprotein complex"/>
    <property type="evidence" value="ECO:0007669"/>
    <property type="project" value="UniProtKB-KW"/>
</dbReference>
<dbReference type="GO" id="GO:0005840">
    <property type="term" value="C:ribosome"/>
    <property type="evidence" value="ECO:0007669"/>
    <property type="project" value="UniProtKB-KW"/>
</dbReference>
<dbReference type="GO" id="GO:0003735">
    <property type="term" value="F:structural constituent of ribosome"/>
    <property type="evidence" value="ECO:0007669"/>
    <property type="project" value="InterPro"/>
</dbReference>
<dbReference type="GO" id="GO:0006412">
    <property type="term" value="P:translation"/>
    <property type="evidence" value="ECO:0007669"/>
    <property type="project" value="UniProtKB-UniRule"/>
</dbReference>
<dbReference type="FunFam" id="1.10.287.3980:FF:000001">
    <property type="entry name" value="Mitochondrial ribosomal protein L34"/>
    <property type="match status" value="1"/>
</dbReference>
<dbReference type="Gene3D" id="1.10.287.3980">
    <property type="match status" value="1"/>
</dbReference>
<dbReference type="HAMAP" id="MF_00391">
    <property type="entry name" value="Ribosomal_bL34"/>
    <property type="match status" value="1"/>
</dbReference>
<dbReference type="InterPro" id="IPR000271">
    <property type="entry name" value="Ribosomal_bL34"/>
</dbReference>
<dbReference type="InterPro" id="IPR020939">
    <property type="entry name" value="Ribosomal_bL34_CS"/>
</dbReference>
<dbReference type="NCBIfam" id="TIGR01030">
    <property type="entry name" value="rpmH_bact"/>
    <property type="match status" value="1"/>
</dbReference>
<dbReference type="PANTHER" id="PTHR14503:SF4">
    <property type="entry name" value="LARGE RIBOSOMAL SUBUNIT PROTEIN BL34M"/>
    <property type="match status" value="1"/>
</dbReference>
<dbReference type="PANTHER" id="PTHR14503">
    <property type="entry name" value="MITOCHONDRIAL RIBOSOMAL PROTEIN 34 FAMILY MEMBER"/>
    <property type="match status" value="1"/>
</dbReference>
<dbReference type="Pfam" id="PF00468">
    <property type="entry name" value="Ribosomal_L34"/>
    <property type="match status" value="1"/>
</dbReference>
<dbReference type="PROSITE" id="PS00784">
    <property type="entry name" value="RIBOSOMAL_L34"/>
    <property type="match status" value="1"/>
</dbReference>
<sequence length="44" mass="5339">MKRTYQPSKQKRNRTHGFRARMATKNGRQVLNRRRAKGRKRLTV</sequence>
<protein>
    <recommendedName>
        <fullName evidence="1">Large ribosomal subunit protein bL34</fullName>
    </recommendedName>
    <alternativeName>
        <fullName evidence="3">50S ribosomal protein L34</fullName>
    </alternativeName>
</protein>
<gene>
    <name evidence="1" type="primary">rpmH</name>
    <name type="ordered locus">COXBURSA331_A2119</name>
</gene>
<accession>A9NBA2</accession>